<proteinExistence type="evidence at protein level"/>
<protein>
    <recommendedName>
        <fullName>Polyphosphate kinase</fullName>
        <ecNumber>2.7.4.1</ecNumber>
    </recommendedName>
    <alternativeName>
        <fullName>ATP-polyphosphate phosphotransferase</fullName>
    </alternativeName>
    <alternativeName>
        <fullName evidence="5">Polyphosphate kinase 1</fullName>
        <shortName evidence="5">PPK1</shortName>
    </alternativeName>
    <alternativeName>
        <fullName>Polyphosphoric acid kinase</fullName>
    </alternativeName>
</protein>
<gene>
    <name type="primary">ppkA</name>
    <name type="ORF">DDB_G0293524</name>
</gene>
<accession>Q54BM7</accession>
<accession>Q9U6U8</accession>
<feature type="chain" id="PRO_0000328623" description="Polyphosphate kinase">
    <location>
        <begin position="1"/>
        <end position="1053"/>
    </location>
</feature>
<feature type="region of interest" description="Disordered" evidence="2">
    <location>
        <begin position="23"/>
        <end position="155"/>
    </location>
</feature>
<feature type="region of interest" description="Disordered" evidence="2">
    <location>
        <begin position="200"/>
        <end position="245"/>
    </location>
</feature>
<feature type="region of interest" description="Disordered" evidence="2">
    <location>
        <begin position="302"/>
        <end position="328"/>
    </location>
</feature>
<feature type="region of interest" description="Disordered" evidence="2">
    <location>
        <begin position="1027"/>
        <end position="1053"/>
    </location>
</feature>
<feature type="compositionally biased region" description="Low complexity" evidence="2">
    <location>
        <begin position="32"/>
        <end position="50"/>
    </location>
</feature>
<feature type="compositionally biased region" description="Acidic residues" evidence="2">
    <location>
        <begin position="81"/>
        <end position="102"/>
    </location>
</feature>
<feature type="compositionally biased region" description="Polar residues" evidence="2">
    <location>
        <begin position="143"/>
        <end position="155"/>
    </location>
</feature>
<feature type="compositionally biased region" description="Low complexity" evidence="2">
    <location>
        <begin position="215"/>
        <end position="239"/>
    </location>
</feature>
<feature type="compositionally biased region" description="Polar residues" evidence="2">
    <location>
        <begin position="1036"/>
        <end position="1046"/>
    </location>
</feature>
<feature type="active site" description="Phosphohistidine intermediate" evidence="1">
    <location>
        <position position="800"/>
    </location>
</feature>
<feature type="sequence conflict" description="In Ref. 1; AAD53165." evidence="6" ref="1">
    <original>T</original>
    <variation>I</variation>
    <location>
        <position position="49"/>
    </location>
</feature>
<feature type="sequence conflict" description="In Ref. 1; AAD53165." evidence="6" ref="1">
    <location>
        <position position="322"/>
    </location>
</feature>
<feature type="sequence conflict" description="In Ref. 1; AAD53165." evidence="6" ref="1">
    <original>E</original>
    <variation>G</variation>
    <location>
        <position position="486"/>
    </location>
</feature>
<feature type="sequence conflict" description="In Ref. 1; AAD53165." evidence="6" ref="1">
    <original>K</original>
    <variation>E</variation>
    <location>
        <position position="489"/>
    </location>
</feature>
<feature type="sequence conflict" description="In Ref. 1; AAD53165." evidence="6" ref="1">
    <original>L</original>
    <variation>F</variation>
    <location>
        <position position="518"/>
    </location>
</feature>
<feature type="sequence conflict" description="In Ref. 1; AAD53165." evidence="6" ref="1">
    <original>IQL</original>
    <variation>Q</variation>
    <location>
        <begin position="880"/>
        <end position="882"/>
    </location>
</feature>
<organism>
    <name type="scientific">Dictyostelium discoideum</name>
    <name type="common">Social amoeba</name>
    <dbReference type="NCBI Taxonomy" id="44689"/>
    <lineage>
        <taxon>Eukaryota</taxon>
        <taxon>Amoebozoa</taxon>
        <taxon>Evosea</taxon>
        <taxon>Eumycetozoa</taxon>
        <taxon>Dictyostelia</taxon>
        <taxon>Dictyosteliales</taxon>
        <taxon>Dictyosteliaceae</taxon>
        <taxon>Dictyostelium</taxon>
    </lineage>
</organism>
<keyword id="KW-0067">ATP-binding</keyword>
<keyword id="KW-0131">Cell cycle</keyword>
<keyword id="KW-0132">Cell division</keyword>
<keyword id="KW-0418">Kinase</keyword>
<keyword id="KW-0547">Nucleotide-binding</keyword>
<keyword id="KW-0581">Phagocytosis</keyword>
<keyword id="KW-0597">Phosphoprotein</keyword>
<keyword id="KW-1185">Reference proteome</keyword>
<keyword id="KW-0749">Sporulation</keyword>
<keyword id="KW-0808">Transferase</keyword>
<evidence type="ECO:0000250" key="1"/>
<evidence type="ECO:0000256" key="2">
    <source>
        <dbReference type="SAM" id="MobiDB-lite"/>
    </source>
</evidence>
<evidence type="ECO:0000269" key="3">
    <source>
    </source>
</evidence>
<evidence type="ECO:0000269" key="4">
    <source>
    </source>
</evidence>
<evidence type="ECO:0000303" key="5">
    <source>
    </source>
</evidence>
<evidence type="ECO:0000305" key="6"/>
<name>PPK1_DICDI</name>
<reference key="1">
    <citation type="submission" date="1999-08" db="EMBL/GenBank/DDBJ databases">
        <title>Polyphosphate kinase is required for normal growth and development gene in Dictyostelium discoideum.</title>
        <authorList>
            <person name="Sims M.D."/>
            <person name="Katz E.R."/>
        </authorList>
    </citation>
    <scope>NUCLEOTIDE SEQUENCE [GENOMIC DNA]</scope>
    <source>
        <strain>Myc-1</strain>
    </source>
</reference>
<reference key="2">
    <citation type="journal article" date="2005" name="Nature">
        <title>The genome of the social amoeba Dictyostelium discoideum.</title>
        <authorList>
            <person name="Eichinger L."/>
            <person name="Pachebat J.A."/>
            <person name="Gloeckner G."/>
            <person name="Rajandream M.A."/>
            <person name="Sucgang R."/>
            <person name="Berriman M."/>
            <person name="Song J."/>
            <person name="Olsen R."/>
            <person name="Szafranski K."/>
            <person name="Xu Q."/>
            <person name="Tunggal B."/>
            <person name="Kummerfeld S."/>
            <person name="Madera M."/>
            <person name="Konfortov B.A."/>
            <person name="Rivero F."/>
            <person name="Bankier A.T."/>
            <person name="Lehmann R."/>
            <person name="Hamlin N."/>
            <person name="Davies R."/>
            <person name="Gaudet P."/>
            <person name="Fey P."/>
            <person name="Pilcher K."/>
            <person name="Chen G."/>
            <person name="Saunders D."/>
            <person name="Sodergren E.J."/>
            <person name="Davis P."/>
            <person name="Kerhornou A."/>
            <person name="Nie X."/>
            <person name="Hall N."/>
            <person name="Anjard C."/>
            <person name="Hemphill L."/>
            <person name="Bason N."/>
            <person name="Farbrother P."/>
            <person name="Desany B."/>
            <person name="Just E."/>
            <person name="Morio T."/>
            <person name="Rost R."/>
            <person name="Churcher C.M."/>
            <person name="Cooper J."/>
            <person name="Haydock S."/>
            <person name="van Driessche N."/>
            <person name="Cronin A."/>
            <person name="Goodhead I."/>
            <person name="Muzny D.M."/>
            <person name="Mourier T."/>
            <person name="Pain A."/>
            <person name="Lu M."/>
            <person name="Harper D."/>
            <person name="Lindsay R."/>
            <person name="Hauser H."/>
            <person name="James K.D."/>
            <person name="Quiles M."/>
            <person name="Madan Babu M."/>
            <person name="Saito T."/>
            <person name="Buchrieser C."/>
            <person name="Wardroper A."/>
            <person name="Felder M."/>
            <person name="Thangavelu M."/>
            <person name="Johnson D."/>
            <person name="Knights A."/>
            <person name="Loulseged H."/>
            <person name="Mungall K.L."/>
            <person name="Oliver K."/>
            <person name="Price C."/>
            <person name="Quail M.A."/>
            <person name="Urushihara H."/>
            <person name="Hernandez J."/>
            <person name="Rabbinowitsch E."/>
            <person name="Steffen D."/>
            <person name="Sanders M."/>
            <person name="Ma J."/>
            <person name="Kohara Y."/>
            <person name="Sharp S."/>
            <person name="Simmonds M.N."/>
            <person name="Spiegler S."/>
            <person name="Tivey A."/>
            <person name="Sugano S."/>
            <person name="White B."/>
            <person name="Walker D."/>
            <person name="Woodward J.R."/>
            <person name="Winckler T."/>
            <person name="Tanaka Y."/>
            <person name="Shaulsky G."/>
            <person name="Schleicher M."/>
            <person name="Weinstock G.M."/>
            <person name="Rosenthal A."/>
            <person name="Cox E.C."/>
            <person name="Chisholm R.L."/>
            <person name="Gibbs R.A."/>
            <person name="Loomis W.F."/>
            <person name="Platzer M."/>
            <person name="Kay R.R."/>
            <person name="Williams J.G."/>
            <person name="Dear P.H."/>
            <person name="Noegel A.A."/>
            <person name="Barrell B.G."/>
            <person name="Kuspa A."/>
        </authorList>
    </citation>
    <scope>NUCLEOTIDE SEQUENCE [LARGE SCALE GENOMIC DNA]</scope>
    <source>
        <strain>AX4</strain>
    </source>
</reference>
<reference key="3">
    <citation type="journal article" date="2005" name="Proc. Natl. Acad. Sci. U.S.A.">
        <title>Inorganic polyphosphate in Dictyostelium discoideum: influence on development, sporulation, and predation.</title>
        <authorList>
            <person name="Zhang H."/>
            <person name="Gomez-Garcia M.R."/>
            <person name="Brown M.R."/>
            <person name="Kornberg A."/>
        </authorList>
    </citation>
    <scope>FUNCTION</scope>
    <scope>DEVELOPMENTAL STAGE</scope>
</reference>
<reference key="4">
    <citation type="journal article" date="2007" name="Proc. Natl. Acad. Sci. U.S.A.">
        <title>Polyphosphate kinase 1, a conserved bacterial enzyme, in a eukaryote, Dictyostelium discoideum, with a role in cytokinesis.</title>
        <authorList>
            <person name="Zhang H."/>
            <person name="Gomez-Garcia M.R."/>
            <person name="Shi X."/>
            <person name="Rao N.N."/>
            <person name="Kornberg A."/>
        </authorList>
    </citation>
    <scope>CHARACTERIZATION</scope>
    <scope>SUBCELLULAR LOCATION</scope>
    <scope>FUNCTION</scope>
    <scope>SUBUNIT</scope>
</reference>
<comment type="function">
    <text evidence="3 4">Catalyzes the reversible transfer of the terminal phosphate of ATP to form a long-chain polyphosphate (polyP). Produces polyP in a broad range of chain lengths (50-300 Pi residues). Involved in development (growth and fruiting body formation), sporulation, phagocytosis, cell division and the late stages of cytokinesis.</text>
</comment>
<comment type="catalytic activity">
    <reaction evidence="4">
        <text>[phosphate](n) + ATP = [phosphate](n+1) + ADP</text>
        <dbReference type="Rhea" id="RHEA:19573"/>
        <dbReference type="Rhea" id="RHEA-COMP:9859"/>
        <dbReference type="Rhea" id="RHEA-COMP:14280"/>
        <dbReference type="ChEBI" id="CHEBI:16838"/>
        <dbReference type="ChEBI" id="CHEBI:30616"/>
        <dbReference type="ChEBI" id="CHEBI:456216"/>
        <dbReference type="EC" id="2.7.4.1"/>
    </reaction>
    <physiologicalReaction direction="left-to-right" evidence="4">
        <dbReference type="Rhea" id="RHEA:19574"/>
    </physiologicalReaction>
</comment>
<comment type="biophysicochemical properties">
    <kinetics>
        <Vmax>0.5 umol/min/mg enzyme</Vmax>
    </kinetics>
    <temperatureDependence>
        <text>Optimum temperature is 37 degrees Celsius.</text>
    </temperatureDependence>
</comment>
<comment type="subunit">
    <text evidence="4">Hexamer. May form higher oligomeric structures in the presence of ATP.</text>
</comment>
<comment type="subcellular location">
    <subcellularLocation>
        <location evidence="4">Vesicle</location>
    </subcellularLocation>
</comment>
<comment type="developmental stage">
    <text evidence="3">Enzymatic activity is higher during the stationary vegetative phase and on the spores.</text>
</comment>
<comment type="similarity">
    <text evidence="6">Belongs to the polyphosphate kinase 1 (PPK1) family.</text>
</comment>
<dbReference type="EC" id="2.7.4.1"/>
<dbReference type="EMBL" id="AF176830">
    <property type="protein sequence ID" value="AAD53165.1"/>
    <property type="molecule type" value="Genomic_DNA"/>
</dbReference>
<dbReference type="EMBL" id="AAFI02000218">
    <property type="protein sequence ID" value="EAL60574.1"/>
    <property type="molecule type" value="Genomic_DNA"/>
</dbReference>
<dbReference type="SMR" id="Q54BM7"/>
<dbReference type="BioGRID" id="1254289">
    <property type="interactions" value="1"/>
</dbReference>
<dbReference type="DIP" id="DIP-46221N"/>
<dbReference type="STRING" id="44689.Q54BM7"/>
<dbReference type="PaxDb" id="44689-DDB0216190"/>
<dbReference type="EnsemblProtists" id="EAL60574">
    <property type="protein sequence ID" value="EAL60574"/>
    <property type="gene ID" value="DDB_G0293524"/>
</dbReference>
<dbReference type="KEGG" id="ddi:DDB_G0293524"/>
<dbReference type="dictyBase" id="DDB_G0293524">
    <property type="gene designation" value="ppk1"/>
</dbReference>
<dbReference type="VEuPathDB" id="AmoebaDB:DDB_G0293524"/>
<dbReference type="eggNOG" id="ENOG502QUEZ">
    <property type="taxonomic scope" value="Eukaryota"/>
</dbReference>
<dbReference type="HOGENOM" id="CLU_290615_0_0_1"/>
<dbReference type="InParanoid" id="Q54BM7"/>
<dbReference type="OMA" id="MTLYRVG"/>
<dbReference type="PhylomeDB" id="Q54BM7"/>
<dbReference type="BRENDA" id="2.7.4.1">
    <property type="organism ID" value="1939"/>
</dbReference>
<dbReference type="PRO" id="PR:Q54BM7"/>
<dbReference type="Proteomes" id="UP000002195">
    <property type="component" value="Chromosome 6"/>
</dbReference>
<dbReference type="GO" id="GO:0016020">
    <property type="term" value="C:membrane"/>
    <property type="evidence" value="ECO:0000314"/>
    <property type="project" value="dictyBase"/>
</dbReference>
<dbReference type="GO" id="GO:0009358">
    <property type="term" value="C:polyphosphate kinase complex"/>
    <property type="evidence" value="ECO:0007669"/>
    <property type="project" value="InterPro"/>
</dbReference>
<dbReference type="GO" id="GO:0031982">
    <property type="term" value="C:vesicle"/>
    <property type="evidence" value="ECO:0000314"/>
    <property type="project" value="dictyBase"/>
</dbReference>
<dbReference type="GO" id="GO:0005524">
    <property type="term" value="F:ATP binding"/>
    <property type="evidence" value="ECO:0007669"/>
    <property type="project" value="UniProtKB-KW"/>
</dbReference>
<dbReference type="GO" id="GO:0008976">
    <property type="term" value="F:polyphosphate kinase activity"/>
    <property type="evidence" value="ECO:0000314"/>
    <property type="project" value="dictyBase"/>
</dbReference>
<dbReference type="GO" id="GO:0000281">
    <property type="term" value="P:mitotic cytokinesis"/>
    <property type="evidence" value="ECO:0000315"/>
    <property type="project" value="dictyBase"/>
</dbReference>
<dbReference type="GO" id="GO:1903665">
    <property type="term" value="P:negative regulation of asexual reproduction"/>
    <property type="evidence" value="ECO:0000315"/>
    <property type="project" value="dictyBase"/>
</dbReference>
<dbReference type="GO" id="GO:0006909">
    <property type="term" value="P:phagocytosis"/>
    <property type="evidence" value="ECO:0000315"/>
    <property type="project" value="dictyBase"/>
</dbReference>
<dbReference type="GO" id="GO:0006799">
    <property type="term" value="P:polyphosphate biosynthetic process"/>
    <property type="evidence" value="ECO:0000314"/>
    <property type="project" value="dictyBase"/>
</dbReference>
<dbReference type="GO" id="GO:0006797">
    <property type="term" value="P:polyphosphate metabolic process"/>
    <property type="evidence" value="ECO:0000315"/>
    <property type="project" value="dictyBase"/>
</dbReference>
<dbReference type="GO" id="GO:0031288">
    <property type="term" value="P:sorocarp morphogenesis"/>
    <property type="evidence" value="ECO:0000315"/>
    <property type="project" value="dictyBase"/>
</dbReference>
<dbReference type="GO" id="GO:0009847">
    <property type="term" value="P:spore germination"/>
    <property type="evidence" value="ECO:0000315"/>
    <property type="project" value="dictyBase"/>
</dbReference>
<dbReference type="GO" id="GO:0030435">
    <property type="term" value="P:sporulation resulting in formation of a cellular spore"/>
    <property type="evidence" value="ECO:0000315"/>
    <property type="project" value="dictyBase"/>
</dbReference>
<dbReference type="CDD" id="cd09165">
    <property type="entry name" value="PLDc_PaPPK1_C1_like"/>
    <property type="match status" value="1"/>
</dbReference>
<dbReference type="CDD" id="cd09168">
    <property type="entry name" value="PLDc_PaPPK1_C2_like"/>
    <property type="match status" value="1"/>
</dbReference>
<dbReference type="Gene3D" id="3.30.870.10">
    <property type="entry name" value="Endonuclease Chain A"/>
    <property type="match status" value="2"/>
</dbReference>
<dbReference type="Gene3D" id="3.30.1840.10">
    <property type="entry name" value="Polyphosphate kinase middle domain"/>
    <property type="match status" value="1"/>
</dbReference>
<dbReference type="Gene3D" id="1.20.58.310">
    <property type="entry name" value="Polyphosphate kinase N-terminal domain"/>
    <property type="match status" value="1"/>
</dbReference>
<dbReference type="HAMAP" id="MF_00347">
    <property type="entry name" value="Polyphosphate_kinase"/>
    <property type="match status" value="1"/>
</dbReference>
<dbReference type="InterPro" id="IPR003414">
    <property type="entry name" value="PP_kinase"/>
</dbReference>
<dbReference type="InterPro" id="IPR041108">
    <property type="entry name" value="PP_kinase_C_1"/>
</dbReference>
<dbReference type="InterPro" id="IPR024953">
    <property type="entry name" value="PP_kinase_middle"/>
</dbReference>
<dbReference type="InterPro" id="IPR036830">
    <property type="entry name" value="PP_kinase_middle_dom_sf"/>
</dbReference>
<dbReference type="InterPro" id="IPR025200">
    <property type="entry name" value="PPK_C_dom2"/>
</dbReference>
<dbReference type="InterPro" id="IPR025198">
    <property type="entry name" value="PPK_N_dom"/>
</dbReference>
<dbReference type="InterPro" id="IPR036832">
    <property type="entry name" value="PPK_N_dom_sf"/>
</dbReference>
<dbReference type="NCBIfam" id="TIGR03705">
    <property type="entry name" value="poly_P_kin"/>
    <property type="match status" value="1"/>
</dbReference>
<dbReference type="NCBIfam" id="NF003921">
    <property type="entry name" value="PRK05443.2-2"/>
    <property type="match status" value="1"/>
</dbReference>
<dbReference type="PANTHER" id="PTHR30218">
    <property type="entry name" value="POLYPHOSPHATE KINASE"/>
    <property type="match status" value="1"/>
</dbReference>
<dbReference type="PANTHER" id="PTHR30218:SF0">
    <property type="entry name" value="POLYPHOSPHATE KINASE"/>
    <property type="match status" value="1"/>
</dbReference>
<dbReference type="Pfam" id="PF02503">
    <property type="entry name" value="PP_kinase"/>
    <property type="match status" value="1"/>
</dbReference>
<dbReference type="Pfam" id="PF13090">
    <property type="entry name" value="PP_kinase_C"/>
    <property type="match status" value="1"/>
</dbReference>
<dbReference type="Pfam" id="PF17941">
    <property type="entry name" value="PP_kinase_C_1"/>
    <property type="match status" value="1"/>
</dbReference>
<dbReference type="Pfam" id="PF13089">
    <property type="entry name" value="PP_kinase_N"/>
    <property type="match status" value="1"/>
</dbReference>
<dbReference type="SUPFAM" id="SSF56024">
    <property type="entry name" value="Phospholipase D/nuclease"/>
    <property type="match status" value="2"/>
</dbReference>
<dbReference type="SUPFAM" id="SSF143724">
    <property type="entry name" value="PHP14-like"/>
    <property type="match status" value="1"/>
</dbReference>
<dbReference type="SUPFAM" id="SSF140356">
    <property type="entry name" value="PPK N-terminal domain-like"/>
    <property type="match status" value="1"/>
</dbReference>
<sequence>MITNSKMENKILDEFDEEELNKLKINSNNKESTTTTTSTTTTTTTTTSTSGEESDDEHTGSSSSTAAMELHRYKISQECPVDFEDDYDEESSSFDEEDEDSAAESNGGNGKLIPNPNDKKKKRSSKSSSKSSKSKSKSKNKETTANPVQNCQLMESGTLFSPTEFVKSSTVNPSKSPVQPIKLSSMLGLSELGTSNVLTVQNPQPISEPLKNDISSGSSSSSSSNNNNSNSNSNGNCNSDSTKSKFTSLNSWDAPPLANVLPDPSYCQDIVDSENNFIVPSVKHTILDVDNLFNNLIQNTNNNNNNDFKSSTMIGKPFSSGGDGSTSPLISGLSSSSIIPNGNGSLAEQQQQQQQSIPESEIPIDIKVLQLSGSRMFFNRELSELIYFYRILYEAYNPTYPILERVRFIAITSQNLDMYFCKRALKLRLGYISTRKTLKPEEHYINMVLNTTRNLINEIYNIYMNILAPELSNNNVFIIKYSDLTEPEKIQLRGFFLQHVFPLMTPLVVDAGHPFPNLSNLSLNIAVLLKHDEDTTRFVRIKVPQRIPRFVHIKQRSNYSIIPMEEIILANLDTLFPNTKILTKSLFRVSRHNDLKLSGEDQANDLLELIKTELHKRKFAPMVRLEVSHNMPAEILDMLKTQLALDAYDVYVINGPLGLQDLFELCKLNLPHLKFQPWVPHIPSRLVNLAKYPSEDVFSVIRKGELLVNLPYLSFNSSVQFFIESAVKDPKVLAIKIAIYRTNSNSQLIRALCEAASHKEVMVLVDLKASGDEEQNTKFARLLEQAGCHVSYGLVGLKTHAKIAMVVREEENGLREYLNISTGNYNASTSDVYADICLFSCDPDLGEDMCNLFNYLTGYSRVSSFKKLLIAPMNMRSTLIQLIDNEAKNAREGKDATINAVMNGLDDKRLVNALYQASIAGVKITLVVRGRCRILPGIKGISENIKVISILGRFLEHSRIYCFHNNGKPKAYIASADWLHRNLKRRVEVMVPVDDANNIKQLYEIINVYCNDSNAWEMLSDGRYKKRSSPIDEDSQTQFMNQTNQKHPVIWSK</sequence>